<accession>Q68XW8</accession>
<name>RL31_RICTY</name>
<sequence length="78" mass="8827">MKNGIHPEYKKLLIKVGSNIFETMSTHPIGEILMDVDFRKHPAWNKDSGNVVNQSNKSVSDFNKRFSGLSFDSKKEAS</sequence>
<organism>
    <name type="scientific">Rickettsia typhi (strain ATCC VR-144 / Wilmington)</name>
    <dbReference type="NCBI Taxonomy" id="257363"/>
    <lineage>
        <taxon>Bacteria</taxon>
        <taxon>Pseudomonadati</taxon>
        <taxon>Pseudomonadota</taxon>
        <taxon>Alphaproteobacteria</taxon>
        <taxon>Rickettsiales</taxon>
        <taxon>Rickettsiaceae</taxon>
        <taxon>Rickettsieae</taxon>
        <taxon>Rickettsia</taxon>
        <taxon>typhus group</taxon>
    </lineage>
</organism>
<feature type="chain" id="PRO_0000259223" description="Large ribosomal subunit protein bL31">
    <location>
        <begin position="1"/>
        <end position="78"/>
    </location>
</feature>
<reference key="1">
    <citation type="journal article" date="2004" name="J. Bacteriol.">
        <title>Complete genome sequence of Rickettsia typhi and comparison with sequences of other Rickettsiae.</title>
        <authorList>
            <person name="McLeod M.P."/>
            <person name="Qin X."/>
            <person name="Karpathy S.E."/>
            <person name="Gioia J."/>
            <person name="Highlander S.K."/>
            <person name="Fox G.E."/>
            <person name="McNeill T.Z."/>
            <person name="Jiang H."/>
            <person name="Muzny D."/>
            <person name="Jacob L.S."/>
            <person name="Hawes A.C."/>
            <person name="Sodergren E."/>
            <person name="Gill R."/>
            <person name="Hume J."/>
            <person name="Morgan M."/>
            <person name="Fan G."/>
            <person name="Amin A.G."/>
            <person name="Gibbs R.A."/>
            <person name="Hong C."/>
            <person name="Yu X.-J."/>
            <person name="Walker D.H."/>
            <person name="Weinstock G.M."/>
        </authorList>
    </citation>
    <scope>NUCLEOTIDE SEQUENCE [LARGE SCALE GENOMIC DNA]</scope>
    <source>
        <strain>ATCC VR-144 / Wilmington</strain>
    </source>
</reference>
<evidence type="ECO:0000250" key="1"/>
<evidence type="ECO:0000305" key="2"/>
<protein>
    <recommendedName>
        <fullName evidence="2">Large ribosomal subunit protein bL31</fullName>
    </recommendedName>
    <alternativeName>
        <fullName>50S ribosomal protein L31</fullName>
    </alternativeName>
</protein>
<gene>
    <name type="primary">rpmE</name>
    <name type="ordered locus">RT0037</name>
</gene>
<dbReference type="EMBL" id="AE017197">
    <property type="protein sequence ID" value="AAU03524.1"/>
    <property type="molecule type" value="Genomic_DNA"/>
</dbReference>
<dbReference type="RefSeq" id="WP_011190511.1">
    <property type="nucleotide sequence ID" value="NC_006142.1"/>
</dbReference>
<dbReference type="KEGG" id="rty:RT0037"/>
<dbReference type="eggNOG" id="COG0254">
    <property type="taxonomic scope" value="Bacteria"/>
</dbReference>
<dbReference type="HOGENOM" id="CLU_114306_3_1_5"/>
<dbReference type="OrthoDB" id="9803251at2"/>
<dbReference type="Proteomes" id="UP000000604">
    <property type="component" value="Chromosome"/>
</dbReference>
<dbReference type="GO" id="GO:1990904">
    <property type="term" value="C:ribonucleoprotein complex"/>
    <property type="evidence" value="ECO:0007669"/>
    <property type="project" value="UniProtKB-KW"/>
</dbReference>
<dbReference type="GO" id="GO:0005840">
    <property type="term" value="C:ribosome"/>
    <property type="evidence" value="ECO:0007669"/>
    <property type="project" value="UniProtKB-KW"/>
</dbReference>
<dbReference type="GO" id="GO:0019843">
    <property type="term" value="F:rRNA binding"/>
    <property type="evidence" value="ECO:0007669"/>
    <property type="project" value="UniProtKB-KW"/>
</dbReference>
<dbReference type="GO" id="GO:0003735">
    <property type="term" value="F:structural constituent of ribosome"/>
    <property type="evidence" value="ECO:0007669"/>
    <property type="project" value="InterPro"/>
</dbReference>
<dbReference type="GO" id="GO:0006412">
    <property type="term" value="P:translation"/>
    <property type="evidence" value="ECO:0007669"/>
    <property type="project" value="InterPro"/>
</dbReference>
<dbReference type="Gene3D" id="4.10.830.30">
    <property type="entry name" value="Ribosomal protein L31"/>
    <property type="match status" value="1"/>
</dbReference>
<dbReference type="InterPro" id="IPR034704">
    <property type="entry name" value="Ribosomal_bL28/bL31-like_sf"/>
</dbReference>
<dbReference type="InterPro" id="IPR002150">
    <property type="entry name" value="Ribosomal_bL31"/>
</dbReference>
<dbReference type="InterPro" id="IPR042105">
    <property type="entry name" value="Ribosomal_bL31_sf"/>
</dbReference>
<dbReference type="NCBIfam" id="TIGR00105">
    <property type="entry name" value="L31"/>
    <property type="match status" value="1"/>
</dbReference>
<dbReference type="Pfam" id="PF01197">
    <property type="entry name" value="Ribosomal_L31"/>
    <property type="match status" value="1"/>
</dbReference>
<dbReference type="SUPFAM" id="SSF143800">
    <property type="entry name" value="L28p-like"/>
    <property type="match status" value="1"/>
</dbReference>
<dbReference type="PROSITE" id="PS01143">
    <property type="entry name" value="RIBOSOMAL_L31"/>
    <property type="match status" value="1"/>
</dbReference>
<proteinExistence type="inferred from homology"/>
<keyword id="KW-0687">Ribonucleoprotein</keyword>
<keyword id="KW-0689">Ribosomal protein</keyword>
<keyword id="KW-0694">RNA-binding</keyword>
<keyword id="KW-0699">rRNA-binding</keyword>
<comment type="function">
    <text evidence="1">Binds the 23S rRNA.</text>
</comment>
<comment type="subunit">
    <text evidence="1">Part of the 50S ribosomal subunit.</text>
</comment>
<comment type="similarity">
    <text evidence="2">Belongs to the bacterial ribosomal protein bL31 family. Type A subfamily.</text>
</comment>